<evidence type="ECO:0000305" key="1"/>
<gene>
    <name type="ordered locus">SE_1123</name>
</gene>
<feature type="chain" id="PRO_0000272013" description="Bacilliredoxin SE_1123">
    <location>
        <begin position="1"/>
        <end position="145"/>
    </location>
</feature>
<accession>Q8CSK2</accession>
<dbReference type="EMBL" id="AE015929">
    <property type="protein sequence ID" value="AAO04720.1"/>
    <property type="molecule type" value="Genomic_DNA"/>
</dbReference>
<dbReference type="RefSeq" id="NP_764678.1">
    <property type="nucleotide sequence ID" value="NC_004461.1"/>
</dbReference>
<dbReference type="SMR" id="Q8CSK2"/>
<dbReference type="KEGG" id="sep:SE_1123"/>
<dbReference type="PATRIC" id="fig|176280.10.peg.1096"/>
<dbReference type="eggNOG" id="ENOG5030YIF">
    <property type="taxonomic scope" value="Bacteria"/>
</dbReference>
<dbReference type="HOGENOM" id="CLU_132521_0_0_9"/>
<dbReference type="OrthoDB" id="9793981at2"/>
<dbReference type="Proteomes" id="UP000001411">
    <property type="component" value="Chromosome"/>
</dbReference>
<dbReference type="GO" id="GO:0045454">
    <property type="term" value="P:cell redox homeostasis"/>
    <property type="evidence" value="ECO:0000250"/>
    <property type="project" value="UniProtKB"/>
</dbReference>
<dbReference type="Gene3D" id="3.40.30.10">
    <property type="entry name" value="Glutaredoxin"/>
    <property type="match status" value="1"/>
</dbReference>
<dbReference type="InterPro" id="IPR009474">
    <property type="entry name" value="BrxB/BrxA"/>
</dbReference>
<dbReference type="NCBIfam" id="TIGR04191">
    <property type="entry name" value="YphP_YqiW"/>
    <property type="match status" value="1"/>
</dbReference>
<dbReference type="PANTHER" id="PTHR40052:SF2">
    <property type="entry name" value="BACILLIREDOXIN BRXA"/>
    <property type="match status" value="1"/>
</dbReference>
<dbReference type="PANTHER" id="PTHR40052">
    <property type="entry name" value="UPF0403 PROTEIN YQIW-RELATED"/>
    <property type="match status" value="1"/>
</dbReference>
<dbReference type="Pfam" id="PF06491">
    <property type="entry name" value="Disulph_isomer"/>
    <property type="match status" value="1"/>
</dbReference>
<name>Y1123_STAES</name>
<organism>
    <name type="scientific">Staphylococcus epidermidis (strain ATCC 12228 / FDA PCI 1200)</name>
    <dbReference type="NCBI Taxonomy" id="176280"/>
    <lineage>
        <taxon>Bacteria</taxon>
        <taxon>Bacillati</taxon>
        <taxon>Bacillota</taxon>
        <taxon>Bacilli</taxon>
        <taxon>Bacillales</taxon>
        <taxon>Staphylococcaceae</taxon>
        <taxon>Staphylococcus</taxon>
    </lineage>
</organism>
<proteinExistence type="inferred from homology"/>
<comment type="similarity">
    <text evidence="1">Belongs to the bacilliredoxin family.</text>
</comment>
<protein>
    <recommendedName>
        <fullName evidence="1">Bacilliredoxin SE_1123</fullName>
    </recommendedName>
</protein>
<sequence length="145" mass="16196">MNGYEAYMKELAQQMRAELTDNGFTSLETSDDVNQYMQNIDNDDTTFVVINSTCGCAAGLARPAAVAVAEQNEVKPDHKVTVFAGQDKEATQTMRDYIQQVPSSPSYALFKGQHLVHFIPREHIEGRDINDIAMDLKDAFDDNCQ</sequence>
<reference key="1">
    <citation type="journal article" date="2003" name="Mol. Microbiol.">
        <title>Genome-based analysis of virulence genes in a non-biofilm-forming Staphylococcus epidermidis strain (ATCC 12228).</title>
        <authorList>
            <person name="Zhang Y.-Q."/>
            <person name="Ren S.-X."/>
            <person name="Li H.-L."/>
            <person name="Wang Y.-X."/>
            <person name="Fu G."/>
            <person name="Yang J."/>
            <person name="Qin Z.-Q."/>
            <person name="Miao Y.-G."/>
            <person name="Wang W.-Y."/>
            <person name="Chen R.-S."/>
            <person name="Shen Y."/>
            <person name="Chen Z."/>
            <person name="Yuan Z.-H."/>
            <person name="Zhao G.-P."/>
            <person name="Qu D."/>
            <person name="Danchin A."/>
            <person name="Wen Y.-M."/>
        </authorList>
    </citation>
    <scope>NUCLEOTIDE SEQUENCE [LARGE SCALE GENOMIC DNA]</scope>
    <source>
        <strain>ATCC 12228 / FDA PCI 1200</strain>
    </source>
</reference>